<evidence type="ECO:0000250" key="1"/>
<evidence type="ECO:0000255" key="2">
    <source>
        <dbReference type="HAMAP-Rule" id="MF_01631"/>
    </source>
</evidence>
<evidence type="ECO:0000305" key="3"/>
<evidence type="ECO:0007829" key="4">
    <source>
        <dbReference type="PDB" id="4AAW"/>
    </source>
</evidence>
<evidence type="ECO:0007829" key="5">
    <source>
        <dbReference type="PDB" id="4AC3"/>
    </source>
</evidence>
<sequence>MSNFAIILAAGKGTRMKSDLPKVLHKVAGISMLEHVFRSVGAIQPEKTVTVVGHKAELVEEVLAEQTEFVTQSEQLGTGHAVMMTEPILEGLSGHTLVIAGDTPLITGESLKNLIDFHINHKNVATILTAETDNPFGYGRIVRNDNAEVLRIVEQKDATDFEKQIKEINTGTYVFDNERLFEALKNINTNNAQGEYYITDVIGIFRETGEKVGAYTLKDFDESLGVNDRVALATAESVMRRRINHKHMVNGVSFVNPEATYIDIDVEIAPEVQIEANVILKGQTKIGAETVLTNGTYVVDSTIGAGAVITNSMIEESSVADGVTVGPYAHIRPNSSLGAQVHIGNFVEVKGSSIGENTKAGHLTYIGNCEVGSNVNFGAGTITVNYDGKNKYKTVIGDNVFVGSNSTIIAPVELGDNSLVGAGSTITKDVPADAIAIGRGRQINKDEYATRLPHHPKNQ</sequence>
<comment type="function">
    <text evidence="2">Catalyzes the last two sequential reactions in the de novo biosynthetic pathway for UDP-N-acetylglucosamine (UDP-GlcNAc). The C-terminal domain catalyzes the transfer of acetyl group from acetyl coenzyme A to glucosamine-1-phosphate (GlcN-1-P) to produce N-acetylglucosamine-1-phosphate (GlcNAc-1-P), which is converted into UDP-GlcNAc by the transfer of uridine 5-monophosphate (from uridine 5-triphosphate), a reaction catalyzed by the N-terminal domain.</text>
</comment>
<comment type="catalytic activity">
    <reaction evidence="2">
        <text>alpha-D-glucosamine 1-phosphate + acetyl-CoA = N-acetyl-alpha-D-glucosamine 1-phosphate + CoA + H(+)</text>
        <dbReference type="Rhea" id="RHEA:13725"/>
        <dbReference type="ChEBI" id="CHEBI:15378"/>
        <dbReference type="ChEBI" id="CHEBI:57287"/>
        <dbReference type="ChEBI" id="CHEBI:57288"/>
        <dbReference type="ChEBI" id="CHEBI:57776"/>
        <dbReference type="ChEBI" id="CHEBI:58516"/>
        <dbReference type="EC" id="2.3.1.157"/>
    </reaction>
</comment>
<comment type="catalytic activity">
    <reaction evidence="2">
        <text>N-acetyl-alpha-D-glucosamine 1-phosphate + UTP + H(+) = UDP-N-acetyl-alpha-D-glucosamine + diphosphate</text>
        <dbReference type="Rhea" id="RHEA:13509"/>
        <dbReference type="ChEBI" id="CHEBI:15378"/>
        <dbReference type="ChEBI" id="CHEBI:33019"/>
        <dbReference type="ChEBI" id="CHEBI:46398"/>
        <dbReference type="ChEBI" id="CHEBI:57705"/>
        <dbReference type="ChEBI" id="CHEBI:57776"/>
        <dbReference type="EC" id="2.7.7.23"/>
    </reaction>
</comment>
<comment type="cofactor">
    <cofactor evidence="1 2">
        <name>Mg(2+)</name>
        <dbReference type="ChEBI" id="CHEBI:18420"/>
    </cofactor>
    <text evidence="1 2">Binds 1 Mg(2+) ion per subunit.</text>
</comment>
<comment type="pathway">
    <text evidence="2">Nucleotide-sugar biosynthesis; UDP-N-acetyl-alpha-D-glucosamine biosynthesis; N-acetyl-alpha-D-glucosamine 1-phosphate from alpha-D-glucosamine 6-phosphate (route II): step 2/2.</text>
</comment>
<comment type="pathway">
    <text evidence="2">Nucleotide-sugar biosynthesis; UDP-N-acetyl-alpha-D-glucosamine biosynthesis; UDP-N-acetyl-alpha-D-glucosamine from N-acetyl-alpha-D-glucosamine 1-phosphate: step 1/1.</text>
</comment>
<comment type="pathway">
    <text evidence="2">Bacterial outer membrane biogenesis; LPS lipid A biosynthesis.</text>
</comment>
<comment type="subunit">
    <text evidence="1 2">Homotrimer.</text>
</comment>
<comment type="subcellular location">
    <subcellularLocation>
        <location evidence="1 2">Cytoplasm</location>
    </subcellularLocation>
</comment>
<comment type="similarity">
    <text evidence="2 3">In the N-terminal section; belongs to the N-acetylglucosamine-1-phosphate uridyltransferase family.</text>
</comment>
<comment type="similarity">
    <text evidence="2 3">In the C-terminal section; belongs to the transferase hexapeptide repeat family.</text>
</comment>
<comment type="sequence caution" evidence="3">
    <conflict type="erroneous initiation">
        <sequence resource="EMBL-CDS" id="AAK99695"/>
    </conflict>
    <text>Extended N-terminus.</text>
</comment>
<reference key="1">
    <citation type="journal article" date="2001" name="J. Bacteriol.">
        <title>Genome of the bacterium Streptococcus pneumoniae strain R6.</title>
        <authorList>
            <person name="Hoskins J."/>
            <person name="Alborn W.E. Jr."/>
            <person name="Arnold J."/>
            <person name="Blaszczak L.C."/>
            <person name="Burgett S."/>
            <person name="DeHoff B.S."/>
            <person name="Estrem S.T."/>
            <person name="Fritz L."/>
            <person name="Fu D.-J."/>
            <person name="Fuller W."/>
            <person name="Geringer C."/>
            <person name="Gilmour R."/>
            <person name="Glass J.S."/>
            <person name="Khoja H."/>
            <person name="Kraft A.R."/>
            <person name="Lagace R.E."/>
            <person name="LeBlanc D.J."/>
            <person name="Lee L.N."/>
            <person name="Lefkowitz E.J."/>
            <person name="Lu J."/>
            <person name="Matsushima P."/>
            <person name="McAhren S.M."/>
            <person name="McHenney M."/>
            <person name="McLeaster K."/>
            <person name="Mundy C.W."/>
            <person name="Nicas T.I."/>
            <person name="Norris F.H."/>
            <person name="O'Gara M."/>
            <person name="Peery R.B."/>
            <person name="Robertson G.T."/>
            <person name="Rockey P."/>
            <person name="Sun P.-M."/>
            <person name="Winkler M.E."/>
            <person name="Yang Y."/>
            <person name="Young-Bellido M."/>
            <person name="Zhao G."/>
            <person name="Zook C.A."/>
            <person name="Baltz R.H."/>
            <person name="Jaskunas S.R."/>
            <person name="Rosteck P.R. Jr."/>
            <person name="Skatrud P.L."/>
            <person name="Glass J.I."/>
        </authorList>
    </citation>
    <scope>NUCLEOTIDE SEQUENCE [LARGE SCALE GENOMIC DNA]</scope>
    <source>
        <strain>ATCC BAA-255 / R6</strain>
    </source>
</reference>
<reference key="2">
    <citation type="journal article" date="2012" name="Bioorg. Med. Chem. Lett.">
        <title>Inhibitors of acetyltransferase domain of N-acetylglucosamine-1-phosphate-uridyltransferase/glucosamine-1-phosphate-acetyltransferase (GlmU). Part 1: Hit to lead evaluation of a novel arylsulfonamide series.</title>
        <authorList>
            <person name="Green O.M."/>
            <person name="McKenzie A.R."/>
            <person name="Shapiro A.B."/>
            <person name="Otterbein L."/>
            <person name="Ni H."/>
            <person name="Patten A."/>
            <person name="Stokes S."/>
            <person name="Albert R."/>
            <person name="Kawatkar S."/>
            <person name="Breed J."/>
        </authorList>
    </citation>
    <scope>X-RAY CRYSTALLOGRAPHY (2.2 ANGSTROMS)</scope>
</reference>
<keyword id="KW-0002">3D-structure</keyword>
<keyword id="KW-0012">Acyltransferase</keyword>
<keyword id="KW-0133">Cell shape</keyword>
<keyword id="KW-0961">Cell wall biogenesis/degradation</keyword>
<keyword id="KW-0963">Cytoplasm</keyword>
<keyword id="KW-0460">Magnesium</keyword>
<keyword id="KW-0479">Metal-binding</keyword>
<keyword id="KW-0511">Multifunctional enzyme</keyword>
<keyword id="KW-0548">Nucleotidyltransferase</keyword>
<keyword id="KW-0573">Peptidoglycan synthesis</keyword>
<keyword id="KW-1185">Reference proteome</keyword>
<keyword id="KW-0677">Repeat</keyword>
<keyword id="KW-0808">Transferase</keyword>
<feature type="chain" id="PRO_0000233851" description="Bifunctional protein GlmU">
    <location>
        <begin position="1"/>
        <end position="459"/>
    </location>
</feature>
<feature type="region of interest" description="Pyrophosphorylase" evidence="1 2">
    <location>
        <begin position="1"/>
        <end position="229"/>
    </location>
</feature>
<feature type="region of interest" description="Linker" evidence="1 2">
    <location>
        <begin position="230"/>
        <end position="250"/>
    </location>
</feature>
<feature type="region of interest" description="N-acetyltransferase" evidence="1 2">
    <location>
        <begin position="251"/>
        <end position="459"/>
    </location>
</feature>
<feature type="active site" description="Proton acceptor" evidence="1 2">
    <location>
        <position position="362"/>
    </location>
</feature>
<feature type="binding site" evidence="1 2">
    <location>
        <begin position="8"/>
        <end position="11"/>
    </location>
    <ligand>
        <name>UDP-N-acetyl-alpha-D-glucosamine</name>
        <dbReference type="ChEBI" id="CHEBI:57705"/>
    </ligand>
</feature>
<feature type="binding site" evidence="1 2">
    <location>
        <position position="22"/>
    </location>
    <ligand>
        <name>UDP-N-acetyl-alpha-D-glucosamine</name>
        <dbReference type="ChEBI" id="CHEBI:57705"/>
    </ligand>
</feature>
<feature type="binding site" evidence="1 2">
    <location>
        <position position="72"/>
    </location>
    <ligand>
        <name>UDP-N-acetyl-alpha-D-glucosamine</name>
        <dbReference type="ChEBI" id="CHEBI:57705"/>
    </ligand>
</feature>
<feature type="binding site" evidence="1 2">
    <location>
        <begin position="77"/>
        <end position="78"/>
    </location>
    <ligand>
        <name>UDP-N-acetyl-alpha-D-glucosamine</name>
        <dbReference type="ChEBI" id="CHEBI:57705"/>
    </ligand>
</feature>
<feature type="binding site" evidence="1 2">
    <location>
        <position position="102"/>
    </location>
    <ligand>
        <name>Mg(2+)</name>
        <dbReference type="ChEBI" id="CHEBI:18420"/>
    </ligand>
</feature>
<feature type="binding site" evidence="1 2">
    <location>
        <position position="139"/>
    </location>
    <ligand>
        <name>UDP-N-acetyl-alpha-D-glucosamine</name>
        <dbReference type="ChEBI" id="CHEBI:57705"/>
    </ligand>
</feature>
<feature type="binding site" evidence="1 2">
    <location>
        <position position="154"/>
    </location>
    <ligand>
        <name>UDP-N-acetyl-alpha-D-glucosamine</name>
        <dbReference type="ChEBI" id="CHEBI:57705"/>
    </ligand>
</feature>
<feature type="binding site" evidence="1 2">
    <location>
        <position position="169"/>
    </location>
    <ligand>
        <name>UDP-N-acetyl-alpha-D-glucosamine</name>
        <dbReference type="ChEBI" id="CHEBI:57705"/>
    </ligand>
</feature>
<feature type="binding site" evidence="1 2">
    <location>
        <position position="227"/>
    </location>
    <ligand>
        <name>Mg(2+)</name>
        <dbReference type="ChEBI" id="CHEBI:18420"/>
    </ligand>
</feature>
<feature type="binding site" evidence="1 2">
    <location>
        <position position="227"/>
    </location>
    <ligand>
        <name>UDP-N-acetyl-alpha-D-glucosamine</name>
        <dbReference type="ChEBI" id="CHEBI:57705"/>
    </ligand>
</feature>
<feature type="binding site" evidence="2">
    <location>
        <position position="332"/>
    </location>
    <ligand>
        <name>UDP-N-acetyl-alpha-D-glucosamine</name>
        <dbReference type="ChEBI" id="CHEBI:57705"/>
    </ligand>
</feature>
<feature type="binding site" evidence="2">
    <location>
        <position position="350"/>
    </location>
    <ligand>
        <name>UDP-N-acetyl-alpha-D-glucosamine</name>
        <dbReference type="ChEBI" id="CHEBI:57705"/>
    </ligand>
</feature>
<feature type="binding site" evidence="2">
    <location>
        <position position="365"/>
    </location>
    <ligand>
        <name>UDP-N-acetyl-alpha-D-glucosamine</name>
        <dbReference type="ChEBI" id="CHEBI:57705"/>
    </ligand>
</feature>
<feature type="binding site" evidence="2">
    <location>
        <position position="376"/>
    </location>
    <ligand>
        <name>UDP-N-acetyl-alpha-D-glucosamine</name>
        <dbReference type="ChEBI" id="CHEBI:57705"/>
    </ligand>
</feature>
<feature type="binding site" evidence="2">
    <location>
        <position position="379"/>
    </location>
    <ligand>
        <name>acetyl-CoA</name>
        <dbReference type="ChEBI" id="CHEBI:57288"/>
    </ligand>
</feature>
<feature type="binding site" evidence="2">
    <location>
        <begin position="385"/>
        <end position="386"/>
    </location>
    <ligand>
        <name>acetyl-CoA</name>
        <dbReference type="ChEBI" id="CHEBI:57288"/>
    </ligand>
</feature>
<feature type="binding site" evidence="1 2">
    <location>
        <position position="404"/>
    </location>
    <ligand>
        <name>acetyl-CoA</name>
        <dbReference type="ChEBI" id="CHEBI:57288"/>
    </ligand>
</feature>
<feature type="binding site" evidence="1 2">
    <location>
        <position position="422"/>
    </location>
    <ligand>
        <name>acetyl-CoA</name>
        <dbReference type="ChEBI" id="CHEBI:57288"/>
    </ligand>
</feature>
<feature type="binding site" evidence="1 2">
    <location>
        <position position="439"/>
    </location>
    <ligand>
        <name>acetyl-CoA</name>
        <dbReference type="ChEBI" id="CHEBI:57288"/>
    </ligand>
</feature>
<feature type="strand" evidence="5">
    <location>
        <begin position="3"/>
        <end position="9"/>
    </location>
</feature>
<feature type="helix" evidence="5">
    <location>
        <begin position="14"/>
        <end position="16"/>
    </location>
</feature>
<feature type="strand" evidence="5">
    <location>
        <begin position="18"/>
        <end position="20"/>
    </location>
</feature>
<feature type="helix" evidence="5">
    <location>
        <begin position="22"/>
        <end position="24"/>
    </location>
</feature>
<feature type="strand" evidence="5">
    <location>
        <begin position="25"/>
        <end position="27"/>
    </location>
</feature>
<feature type="helix" evidence="5">
    <location>
        <begin position="32"/>
        <end position="41"/>
    </location>
</feature>
<feature type="strand" evidence="5">
    <location>
        <begin position="46"/>
        <end position="52"/>
    </location>
</feature>
<feature type="helix" evidence="5">
    <location>
        <begin position="56"/>
        <end position="62"/>
    </location>
</feature>
<feature type="turn" evidence="5">
    <location>
        <begin position="63"/>
        <end position="66"/>
    </location>
</feature>
<feature type="strand" evidence="5">
    <location>
        <begin position="67"/>
        <end position="71"/>
    </location>
</feature>
<feature type="helix" evidence="5">
    <location>
        <begin position="78"/>
        <end position="83"/>
    </location>
</feature>
<feature type="helix" evidence="5">
    <location>
        <begin position="86"/>
        <end position="89"/>
    </location>
</feature>
<feature type="strand" evidence="5">
    <location>
        <begin position="94"/>
        <end position="100"/>
    </location>
</feature>
<feature type="helix" evidence="5">
    <location>
        <begin position="108"/>
        <end position="120"/>
    </location>
</feature>
<feature type="strand" evidence="5">
    <location>
        <begin position="124"/>
        <end position="131"/>
    </location>
</feature>
<feature type="strand" evidence="5">
    <location>
        <begin position="140"/>
        <end position="143"/>
    </location>
</feature>
<feature type="strand" evidence="5">
    <location>
        <begin position="149"/>
        <end position="153"/>
    </location>
</feature>
<feature type="helix" evidence="5">
    <location>
        <begin position="155"/>
        <end position="157"/>
    </location>
</feature>
<feature type="helix" evidence="5">
    <location>
        <begin position="160"/>
        <end position="163"/>
    </location>
</feature>
<feature type="strand" evidence="5">
    <location>
        <begin position="167"/>
        <end position="176"/>
    </location>
</feature>
<feature type="helix" evidence="5">
    <location>
        <begin position="177"/>
        <end position="189"/>
    </location>
</feature>
<feature type="helix" evidence="5">
    <location>
        <begin position="198"/>
        <end position="207"/>
    </location>
</feature>
<feature type="strand" evidence="5">
    <location>
        <begin position="212"/>
        <end position="216"/>
    </location>
</feature>
<feature type="helix" evidence="5">
    <location>
        <begin position="220"/>
        <end position="223"/>
    </location>
</feature>
<feature type="helix" evidence="5">
    <location>
        <begin position="229"/>
        <end position="249"/>
    </location>
</feature>
<feature type="strand" evidence="5">
    <location>
        <begin position="253"/>
        <end position="255"/>
    </location>
</feature>
<feature type="helix" evidence="4">
    <location>
        <begin position="257"/>
        <end position="259"/>
    </location>
</feature>
<feature type="strand" evidence="5">
    <location>
        <begin position="279"/>
        <end position="283"/>
    </location>
</feature>
<feature type="strand" evidence="5">
    <location>
        <begin position="297"/>
        <end position="300"/>
    </location>
</feature>
<feature type="strand" evidence="5">
    <location>
        <begin position="313"/>
        <end position="316"/>
    </location>
</feature>
<feature type="strand" evidence="5">
    <location>
        <begin position="342"/>
        <end position="351"/>
    </location>
</feature>
<feature type="strand" evidence="5">
    <location>
        <begin position="359"/>
        <end position="371"/>
    </location>
</feature>
<feature type="strand" evidence="5">
    <location>
        <begin position="382"/>
        <end position="384"/>
    </location>
</feature>
<feature type="strand" evidence="5">
    <location>
        <begin position="386"/>
        <end position="389"/>
    </location>
</feature>
<feature type="strand" evidence="5">
    <location>
        <begin position="394"/>
        <end position="396"/>
    </location>
</feature>
<feature type="strand" evidence="5">
    <location>
        <begin position="407"/>
        <end position="414"/>
    </location>
</feature>
<feature type="helix" evidence="5">
    <location>
        <begin position="448"/>
        <end position="451"/>
    </location>
</feature>
<feature type="helix" evidence="5">
    <location>
        <begin position="456"/>
        <end position="458"/>
    </location>
</feature>
<gene>
    <name evidence="2" type="primary">glmU</name>
    <name type="ordered locus">spr0891</name>
</gene>
<accession>Q8DQ18</accession>
<organism>
    <name type="scientific">Streptococcus pneumoniae (strain ATCC BAA-255 / R6)</name>
    <dbReference type="NCBI Taxonomy" id="171101"/>
    <lineage>
        <taxon>Bacteria</taxon>
        <taxon>Bacillati</taxon>
        <taxon>Bacillota</taxon>
        <taxon>Bacilli</taxon>
        <taxon>Lactobacillales</taxon>
        <taxon>Streptococcaceae</taxon>
        <taxon>Streptococcus</taxon>
    </lineage>
</organism>
<dbReference type="EC" id="2.7.7.23" evidence="2"/>
<dbReference type="EC" id="2.3.1.157" evidence="2"/>
<dbReference type="EMBL" id="AE007317">
    <property type="protein sequence ID" value="AAK99695.1"/>
    <property type="status" value="ALT_INIT"/>
    <property type="molecule type" value="Genomic_DNA"/>
</dbReference>
<dbReference type="PIR" id="C97983">
    <property type="entry name" value="C97983"/>
</dbReference>
<dbReference type="RefSeq" id="NP_358485.1">
    <property type="nucleotide sequence ID" value="NC_003098.1"/>
</dbReference>
<dbReference type="RefSeq" id="WP_000064394.1">
    <property type="nucleotide sequence ID" value="NC_003098.1"/>
</dbReference>
<dbReference type="PDB" id="4AAW">
    <property type="method" value="X-ray"/>
    <property type="resolution" value="2.20 A"/>
    <property type="chains" value="A=1-459"/>
</dbReference>
<dbReference type="PDB" id="4AC3">
    <property type="method" value="X-ray"/>
    <property type="resolution" value="2.10 A"/>
    <property type="chains" value="A=1-459"/>
</dbReference>
<dbReference type="PDBsum" id="4AAW"/>
<dbReference type="PDBsum" id="4AC3"/>
<dbReference type="SMR" id="Q8DQ18"/>
<dbReference type="STRING" id="171101.spr0891"/>
<dbReference type="BindingDB" id="Q8DQ18"/>
<dbReference type="KEGG" id="spr:spr0891"/>
<dbReference type="PATRIC" id="fig|171101.6.peg.978"/>
<dbReference type="eggNOG" id="COG1207">
    <property type="taxonomic scope" value="Bacteria"/>
</dbReference>
<dbReference type="HOGENOM" id="CLU_029499_15_2_9"/>
<dbReference type="UniPathway" id="UPA00113">
    <property type="reaction ID" value="UER00532"/>
</dbReference>
<dbReference type="UniPathway" id="UPA00113">
    <property type="reaction ID" value="UER00533"/>
</dbReference>
<dbReference type="UniPathway" id="UPA00973"/>
<dbReference type="EvolutionaryTrace" id="Q8DQ18"/>
<dbReference type="PRO" id="PR:Q8DQ18"/>
<dbReference type="Proteomes" id="UP000000586">
    <property type="component" value="Chromosome"/>
</dbReference>
<dbReference type="GO" id="GO:0005737">
    <property type="term" value="C:cytoplasm"/>
    <property type="evidence" value="ECO:0007669"/>
    <property type="project" value="UniProtKB-SubCell"/>
</dbReference>
<dbReference type="GO" id="GO:0016020">
    <property type="term" value="C:membrane"/>
    <property type="evidence" value="ECO:0007669"/>
    <property type="project" value="GOC"/>
</dbReference>
<dbReference type="GO" id="GO:0019134">
    <property type="term" value="F:glucosamine-1-phosphate N-acetyltransferase activity"/>
    <property type="evidence" value="ECO:0007669"/>
    <property type="project" value="UniProtKB-UniRule"/>
</dbReference>
<dbReference type="GO" id="GO:0000287">
    <property type="term" value="F:magnesium ion binding"/>
    <property type="evidence" value="ECO:0007669"/>
    <property type="project" value="UniProtKB-UniRule"/>
</dbReference>
<dbReference type="GO" id="GO:0003977">
    <property type="term" value="F:UDP-N-acetylglucosamine diphosphorylase activity"/>
    <property type="evidence" value="ECO:0007669"/>
    <property type="project" value="UniProtKB-UniRule"/>
</dbReference>
<dbReference type="GO" id="GO:0000902">
    <property type="term" value="P:cell morphogenesis"/>
    <property type="evidence" value="ECO:0007669"/>
    <property type="project" value="UniProtKB-UniRule"/>
</dbReference>
<dbReference type="GO" id="GO:0071555">
    <property type="term" value="P:cell wall organization"/>
    <property type="evidence" value="ECO:0007669"/>
    <property type="project" value="UniProtKB-KW"/>
</dbReference>
<dbReference type="GO" id="GO:0009245">
    <property type="term" value="P:lipid A biosynthetic process"/>
    <property type="evidence" value="ECO:0007669"/>
    <property type="project" value="UniProtKB-UniRule"/>
</dbReference>
<dbReference type="GO" id="GO:0009252">
    <property type="term" value="P:peptidoglycan biosynthetic process"/>
    <property type="evidence" value="ECO:0007669"/>
    <property type="project" value="UniProtKB-UniRule"/>
</dbReference>
<dbReference type="GO" id="GO:0008360">
    <property type="term" value="P:regulation of cell shape"/>
    <property type="evidence" value="ECO:0007669"/>
    <property type="project" value="UniProtKB-KW"/>
</dbReference>
<dbReference type="GO" id="GO:0006048">
    <property type="term" value="P:UDP-N-acetylglucosamine biosynthetic process"/>
    <property type="evidence" value="ECO:0007669"/>
    <property type="project" value="UniProtKB-UniPathway"/>
</dbReference>
<dbReference type="CDD" id="cd02540">
    <property type="entry name" value="GT2_GlmU_N_bac"/>
    <property type="match status" value="1"/>
</dbReference>
<dbReference type="CDD" id="cd03353">
    <property type="entry name" value="LbH_GlmU_C"/>
    <property type="match status" value="1"/>
</dbReference>
<dbReference type="Gene3D" id="2.160.10.10">
    <property type="entry name" value="Hexapeptide repeat proteins"/>
    <property type="match status" value="1"/>
</dbReference>
<dbReference type="Gene3D" id="3.90.550.10">
    <property type="entry name" value="Spore Coat Polysaccharide Biosynthesis Protein SpsA, Chain A"/>
    <property type="match status" value="1"/>
</dbReference>
<dbReference type="HAMAP" id="MF_01631">
    <property type="entry name" value="GlmU"/>
    <property type="match status" value="1"/>
</dbReference>
<dbReference type="InterPro" id="IPR005882">
    <property type="entry name" value="Bifunctional_GlmU"/>
</dbReference>
<dbReference type="InterPro" id="IPR050065">
    <property type="entry name" value="GlmU-like"/>
</dbReference>
<dbReference type="InterPro" id="IPR038009">
    <property type="entry name" value="GlmU_C_LbH"/>
</dbReference>
<dbReference type="InterPro" id="IPR001451">
    <property type="entry name" value="Hexapep"/>
</dbReference>
<dbReference type="InterPro" id="IPR018357">
    <property type="entry name" value="Hexapep_transf_CS"/>
</dbReference>
<dbReference type="InterPro" id="IPR005835">
    <property type="entry name" value="NTP_transferase_dom"/>
</dbReference>
<dbReference type="InterPro" id="IPR029044">
    <property type="entry name" value="Nucleotide-diphossugar_trans"/>
</dbReference>
<dbReference type="InterPro" id="IPR011004">
    <property type="entry name" value="Trimer_LpxA-like_sf"/>
</dbReference>
<dbReference type="NCBIfam" id="TIGR01173">
    <property type="entry name" value="glmU"/>
    <property type="match status" value="1"/>
</dbReference>
<dbReference type="NCBIfam" id="NF010934">
    <property type="entry name" value="PRK14354.1"/>
    <property type="match status" value="1"/>
</dbReference>
<dbReference type="PANTHER" id="PTHR43584:SF3">
    <property type="entry name" value="BIFUNCTIONAL PROTEIN GLMU"/>
    <property type="match status" value="1"/>
</dbReference>
<dbReference type="PANTHER" id="PTHR43584">
    <property type="entry name" value="NUCLEOTIDYL TRANSFERASE"/>
    <property type="match status" value="1"/>
</dbReference>
<dbReference type="Pfam" id="PF14602">
    <property type="entry name" value="Hexapep_2"/>
    <property type="match status" value="1"/>
</dbReference>
<dbReference type="Pfam" id="PF00483">
    <property type="entry name" value="NTP_transferase"/>
    <property type="match status" value="1"/>
</dbReference>
<dbReference type="SUPFAM" id="SSF53448">
    <property type="entry name" value="Nucleotide-diphospho-sugar transferases"/>
    <property type="match status" value="1"/>
</dbReference>
<dbReference type="SUPFAM" id="SSF51161">
    <property type="entry name" value="Trimeric LpxA-like enzymes"/>
    <property type="match status" value="1"/>
</dbReference>
<dbReference type="PROSITE" id="PS00101">
    <property type="entry name" value="HEXAPEP_TRANSFERASES"/>
    <property type="match status" value="1"/>
</dbReference>
<name>GLMU_STRR6</name>
<protein>
    <recommendedName>
        <fullName evidence="2">Bifunctional protein GlmU</fullName>
    </recommendedName>
    <domain>
        <recommendedName>
            <fullName evidence="2">UDP-N-acetylglucosamine pyrophosphorylase</fullName>
            <ecNumber evidence="2">2.7.7.23</ecNumber>
        </recommendedName>
        <alternativeName>
            <fullName evidence="2">N-acetylglucosamine-1-phosphate uridyltransferase</fullName>
        </alternativeName>
    </domain>
    <domain>
        <recommendedName>
            <fullName evidence="2">Glucosamine-1-phosphate N-acetyltransferase</fullName>
            <ecNumber evidence="2">2.3.1.157</ecNumber>
        </recommendedName>
    </domain>
</protein>
<proteinExistence type="evidence at protein level"/>